<dbReference type="EC" id="6.3.1.20" evidence="1"/>
<dbReference type="EMBL" id="CP000668">
    <property type="protein sequence ID" value="ABP39142.1"/>
    <property type="molecule type" value="Genomic_DNA"/>
</dbReference>
<dbReference type="RefSeq" id="WP_002211816.1">
    <property type="nucleotide sequence ID" value="NZ_CP009715.1"/>
</dbReference>
<dbReference type="SMR" id="A4TIN0"/>
<dbReference type="KEGG" id="ypp:YPDSF_0736"/>
<dbReference type="PATRIC" id="fig|386656.14.peg.3132"/>
<dbReference type="UniPathway" id="UPA00537">
    <property type="reaction ID" value="UER00594"/>
</dbReference>
<dbReference type="UniPathway" id="UPA00537">
    <property type="reaction ID" value="UER00595"/>
</dbReference>
<dbReference type="GO" id="GO:0005829">
    <property type="term" value="C:cytosol"/>
    <property type="evidence" value="ECO:0007669"/>
    <property type="project" value="TreeGrafter"/>
</dbReference>
<dbReference type="GO" id="GO:0005524">
    <property type="term" value="F:ATP binding"/>
    <property type="evidence" value="ECO:0007669"/>
    <property type="project" value="UniProtKB-KW"/>
</dbReference>
<dbReference type="GO" id="GO:0016979">
    <property type="term" value="F:lipoate-protein ligase activity"/>
    <property type="evidence" value="ECO:0007669"/>
    <property type="project" value="UniProtKB-UniRule"/>
</dbReference>
<dbReference type="GO" id="GO:0017118">
    <property type="term" value="F:lipoyltransferase activity"/>
    <property type="evidence" value="ECO:0007669"/>
    <property type="project" value="TreeGrafter"/>
</dbReference>
<dbReference type="GO" id="GO:0036211">
    <property type="term" value="P:protein modification process"/>
    <property type="evidence" value="ECO:0007669"/>
    <property type="project" value="InterPro"/>
</dbReference>
<dbReference type="CDD" id="cd16443">
    <property type="entry name" value="LplA"/>
    <property type="match status" value="1"/>
</dbReference>
<dbReference type="FunFam" id="3.30.930.10:FF:000024">
    <property type="entry name" value="Lipoate-protein ligase A"/>
    <property type="match status" value="1"/>
</dbReference>
<dbReference type="Gene3D" id="3.30.930.10">
    <property type="entry name" value="Bira Bifunctional Protein, Domain 2"/>
    <property type="match status" value="1"/>
</dbReference>
<dbReference type="Gene3D" id="3.30.390.50">
    <property type="entry name" value="CO dehydrogenase flavoprotein, C-terminal domain"/>
    <property type="match status" value="1"/>
</dbReference>
<dbReference type="HAMAP" id="MF_01602">
    <property type="entry name" value="LplA"/>
    <property type="match status" value="1"/>
</dbReference>
<dbReference type="InterPro" id="IPR045864">
    <property type="entry name" value="aa-tRNA-synth_II/BPL/LPL"/>
</dbReference>
<dbReference type="InterPro" id="IPR004143">
    <property type="entry name" value="BPL_LPL_catalytic"/>
</dbReference>
<dbReference type="InterPro" id="IPR023741">
    <property type="entry name" value="Lipoate_ligase_A"/>
</dbReference>
<dbReference type="InterPro" id="IPR019491">
    <property type="entry name" value="Lipoate_protein_ligase_C"/>
</dbReference>
<dbReference type="InterPro" id="IPR004562">
    <property type="entry name" value="LipoylTrfase_LipoateP_Ligase"/>
</dbReference>
<dbReference type="NCBIfam" id="TIGR00545">
    <property type="entry name" value="lipoyltrans"/>
    <property type="match status" value="1"/>
</dbReference>
<dbReference type="PANTHER" id="PTHR12561">
    <property type="entry name" value="LIPOATE-PROTEIN LIGASE"/>
    <property type="match status" value="1"/>
</dbReference>
<dbReference type="PANTHER" id="PTHR12561:SF3">
    <property type="entry name" value="LIPOYLTRANSFERASE 1, MITOCHONDRIAL"/>
    <property type="match status" value="1"/>
</dbReference>
<dbReference type="Pfam" id="PF10437">
    <property type="entry name" value="Lip_prot_lig_C"/>
    <property type="match status" value="1"/>
</dbReference>
<dbReference type="Pfam" id="PF21948">
    <property type="entry name" value="LplA-B_cat"/>
    <property type="match status" value="1"/>
</dbReference>
<dbReference type="SUPFAM" id="SSF55681">
    <property type="entry name" value="Class II aaRS and biotin synthetases"/>
    <property type="match status" value="1"/>
</dbReference>
<dbReference type="SUPFAM" id="SSF82649">
    <property type="entry name" value="SufE/NifU"/>
    <property type="match status" value="1"/>
</dbReference>
<dbReference type="PROSITE" id="PS51733">
    <property type="entry name" value="BPL_LPL_CATALYTIC"/>
    <property type="match status" value="1"/>
</dbReference>
<evidence type="ECO:0000255" key="1">
    <source>
        <dbReference type="HAMAP-Rule" id="MF_01602"/>
    </source>
</evidence>
<evidence type="ECO:0000255" key="2">
    <source>
        <dbReference type="PROSITE-ProRule" id="PRU01067"/>
    </source>
</evidence>
<proteinExistence type="inferred from homology"/>
<sequence>MSSLRLLISDSYDPWFNLAVEECIFRQMSPNQRVLFLWRNADTVVIGRAQNPWKECNTRRMEQDGVKLARRSSGGGAVFHDLGNTCFTFMAGKPGYDKTISTQIILNALASLGIQATASGRNDLVVINGEDERKVSGSAYKETKDRGFHHGTLLLNADLSRLADYLNPDPKKLQAKGITSVRSRVTNLVELLPGIDHGKIRTAIEQAFFAYYDEQVSAEVISPQSLPNLPGFTEQFAKQSSWEWNFGQAPAFSHVVDTRFIWGGIELHFDVLHGAIDRCQIFTDSLNPTPLEALAQRLQGAAYRPDAIDKICQHWIDDFPELQTELQQACHWLVEVLR</sequence>
<comment type="function">
    <text evidence="1">Catalyzes both the ATP-dependent activation of exogenously supplied lipoate to lipoyl-AMP and the transfer of the activated lipoyl onto the lipoyl domains of lipoate-dependent enzymes.</text>
</comment>
<comment type="catalytic activity">
    <reaction evidence="1">
        <text>L-lysyl-[lipoyl-carrier protein] + (R)-lipoate + ATP = N(6)-[(R)-lipoyl]-L-lysyl-[lipoyl-carrier protein] + AMP + diphosphate + H(+)</text>
        <dbReference type="Rhea" id="RHEA:49288"/>
        <dbReference type="Rhea" id="RHEA-COMP:10500"/>
        <dbReference type="Rhea" id="RHEA-COMP:10502"/>
        <dbReference type="ChEBI" id="CHEBI:15378"/>
        <dbReference type="ChEBI" id="CHEBI:29969"/>
        <dbReference type="ChEBI" id="CHEBI:30616"/>
        <dbReference type="ChEBI" id="CHEBI:33019"/>
        <dbReference type="ChEBI" id="CHEBI:83088"/>
        <dbReference type="ChEBI" id="CHEBI:83099"/>
        <dbReference type="ChEBI" id="CHEBI:456215"/>
        <dbReference type="EC" id="6.3.1.20"/>
    </reaction>
</comment>
<comment type="pathway">
    <text evidence="1">Protein modification; protein lipoylation via exogenous pathway; protein N(6)-(lipoyl)lysine from lipoate: step 1/2.</text>
</comment>
<comment type="pathway">
    <text evidence="1">Protein modification; protein lipoylation via exogenous pathway; protein N(6)-(lipoyl)lysine from lipoate: step 2/2.</text>
</comment>
<comment type="subunit">
    <text evidence="1">Monomer.</text>
</comment>
<comment type="subcellular location">
    <subcellularLocation>
        <location evidence="1">Cytoplasm</location>
    </subcellularLocation>
</comment>
<comment type="miscellaneous">
    <text evidence="1">In the transfer reaction, the free carboxyl group of lipoic acid is attached via an amide linkage to the epsilon-amino group of a specific lysine residue of lipoyl domains of lipoate-dependent enzymes.</text>
</comment>
<comment type="similarity">
    <text evidence="1">Belongs to the LplA family.</text>
</comment>
<accession>A4TIN0</accession>
<protein>
    <recommendedName>
        <fullName evidence="1">Lipoate-protein ligase A</fullName>
        <ecNumber evidence="1">6.3.1.20</ecNumber>
    </recommendedName>
    <alternativeName>
        <fullName evidence="1">Lipoate--protein ligase</fullName>
    </alternativeName>
</protein>
<reference key="1">
    <citation type="submission" date="2007-02" db="EMBL/GenBank/DDBJ databases">
        <title>Complete sequence of chromosome of Yersinia pestis Pestoides F.</title>
        <authorList>
            <consortium name="US DOE Joint Genome Institute"/>
            <person name="Copeland A."/>
            <person name="Lucas S."/>
            <person name="Lapidus A."/>
            <person name="Barry K."/>
            <person name="Detter J.C."/>
            <person name="Glavina del Rio T."/>
            <person name="Hammon N."/>
            <person name="Israni S."/>
            <person name="Dalin E."/>
            <person name="Tice H."/>
            <person name="Pitluck S."/>
            <person name="Di Bartolo G."/>
            <person name="Chain P."/>
            <person name="Malfatti S."/>
            <person name="Shin M."/>
            <person name="Vergez L."/>
            <person name="Schmutz J."/>
            <person name="Larimer F."/>
            <person name="Land M."/>
            <person name="Hauser L."/>
            <person name="Worsham P."/>
            <person name="Chu M."/>
            <person name="Bearden S."/>
            <person name="Garcia E."/>
            <person name="Richardson P."/>
        </authorList>
    </citation>
    <scope>NUCLEOTIDE SEQUENCE [LARGE SCALE GENOMIC DNA]</scope>
    <source>
        <strain>Pestoides F</strain>
    </source>
</reference>
<keyword id="KW-0067">ATP-binding</keyword>
<keyword id="KW-0963">Cytoplasm</keyword>
<keyword id="KW-0436">Ligase</keyword>
<keyword id="KW-0547">Nucleotide-binding</keyword>
<feature type="chain" id="PRO_1000069395" description="Lipoate-protein ligase A">
    <location>
        <begin position="1"/>
        <end position="338"/>
    </location>
</feature>
<feature type="domain" description="BPL/LPL catalytic" evidence="2">
    <location>
        <begin position="29"/>
        <end position="216"/>
    </location>
</feature>
<feature type="binding site" evidence="1">
    <location>
        <position position="71"/>
    </location>
    <ligand>
        <name>ATP</name>
        <dbReference type="ChEBI" id="CHEBI:30616"/>
    </ligand>
</feature>
<feature type="binding site" evidence="1">
    <location>
        <begin position="76"/>
        <end position="79"/>
    </location>
    <ligand>
        <name>ATP</name>
        <dbReference type="ChEBI" id="CHEBI:30616"/>
    </ligand>
</feature>
<feature type="binding site" evidence="1">
    <location>
        <position position="134"/>
    </location>
    <ligand>
        <name>(R)-lipoate</name>
        <dbReference type="ChEBI" id="CHEBI:83088"/>
    </ligand>
</feature>
<feature type="binding site" evidence="1">
    <location>
        <position position="134"/>
    </location>
    <ligand>
        <name>ATP</name>
        <dbReference type="ChEBI" id="CHEBI:30616"/>
    </ligand>
</feature>
<name>LPLA_YERPP</name>
<organism>
    <name type="scientific">Yersinia pestis (strain Pestoides F)</name>
    <dbReference type="NCBI Taxonomy" id="386656"/>
    <lineage>
        <taxon>Bacteria</taxon>
        <taxon>Pseudomonadati</taxon>
        <taxon>Pseudomonadota</taxon>
        <taxon>Gammaproteobacteria</taxon>
        <taxon>Enterobacterales</taxon>
        <taxon>Yersiniaceae</taxon>
        <taxon>Yersinia</taxon>
    </lineage>
</organism>
<gene>
    <name evidence="1" type="primary">lplA</name>
    <name type="ordered locus">YPDSF_0736</name>
</gene>